<dbReference type="EMBL" id="CP000613">
    <property type="protein sequence ID" value="ACI98138.1"/>
    <property type="molecule type" value="Genomic_DNA"/>
</dbReference>
<dbReference type="RefSeq" id="WP_012565930.1">
    <property type="nucleotide sequence ID" value="NC_011420.2"/>
</dbReference>
<dbReference type="SMR" id="B6IRQ2"/>
<dbReference type="STRING" id="414684.RC1_0707"/>
<dbReference type="KEGG" id="rce:RC1_0707"/>
<dbReference type="eggNOG" id="COG0049">
    <property type="taxonomic scope" value="Bacteria"/>
</dbReference>
<dbReference type="HOGENOM" id="CLU_072226_1_1_5"/>
<dbReference type="OrthoDB" id="9807653at2"/>
<dbReference type="Proteomes" id="UP000001591">
    <property type="component" value="Chromosome"/>
</dbReference>
<dbReference type="GO" id="GO:0015935">
    <property type="term" value="C:small ribosomal subunit"/>
    <property type="evidence" value="ECO:0007669"/>
    <property type="project" value="InterPro"/>
</dbReference>
<dbReference type="GO" id="GO:0019843">
    <property type="term" value="F:rRNA binding"/>
    <property type="evidence" value="ECO:0007669"/>
    <property type="project" value="UniProtKB-UniRule"/>
</dbReference>
<dbReference type="GO" id="GO:0003735">
    <property type="term" value="F:structural constituent of ribosome"/>
    <property type="evidence" value="ECO:0007669"/>
    <property type="project" value="InterPro"/>
</dbReference>
<dbReference type="GO" id="GO:0000049">
    <property type="term" value="F:tRNA binding"/>
    <property type="evidence" value="ECO:0007669"/>
    <property type="project" value="UniProtKB-UniRule"/>
</dbReference>
<dbReference type="GO" id="GO:0006412">
    <property type="term" value="P:translation"/>
    <property type="evidence" value="ECO:0007669"/>
    <property type="project" value="UniProtKB-UniRule"/>
</dbReference>
<dbReference type="CDD" id="cd14869">
    <property type="entry name" value="uS7_Bacteria"/>
    <property type="match status" value="1"/>
</dbReference>
<dbReference type="FunFam" id="1.10.455.10:FF:000001">
    <property type="entry name" value="30S ribosomal protein S7"/>
    <property type="match status" value="1"/>
</dbReference>
<dbReference type="Gene3D" id="1.10.455.10">
    <property type="entry name" value="Ribosomal protein S7 domain"/>
    <property type="match status" value="1"/>
</dbReference>
<dbReference type="HAMAP" id="MF_00480_B">
    <property type="entry name" value="Ribosomal_uS7_B"/>
    <property type="match status" value="1"/>
</dbReference>
<dbReference type="InterPro" id="IPR000235">
    <property type="entry name" value="Ribosomal_uS7"/>
</dbReference>
<dbReference type="InterPro" id="IPR005717">
    <property type="entry name" value="Ribosomal_uS7_bac/org-type"/>
</dbReference>
<dbReference type="InterPro" id="IPR020606">
    <property type="entry name" value="Ribosomal_uS7_CS"/>
</dbReference>
<dbReference type="InterPro" id="IPR023798">
    <property type="entry name" value="Ribosomal_uS7_dom"/>
</dbReference>
<dbReference type="InterPro" id="IPR036823">
    <property type="entry name" value="Ribosomal_uS7_dom_sf"/>
</dbReference>
<dbReference type="NCBIfam" id="TIGR01029">
    <property type="entry name" value="rpsG_bact"/>
    <property type="match status" value="1"/>
</dbReference>
<dbReference type="PANTHER" id="PTHR11205">
    <property type="entry name" value="RIBOSOMAL PROTEIN S7"/>
    <property type="match status" value="1"/>
</dbReference>
<dbReference type="Pfam" id="PF00177">
    <property type="entry name" value="Ribosomal_S7"/>
    <property type="match status" value="1"/>
</dbReference>
<dbReference type="PIRSF" id="PIRSF002122">
    <property type="entry name" value="RPS7p_RPS7a_RPS5e_RPS7o"/>
    <property type="match status" value="1"/>
</dbReference>
<dbReference type="SUPFAM" id="SSF47973">
    <property type="entry name" value="Ribosomal protein S7"/>
    <property type="match status" value="1"/>
</dbReference>
<dbReference type="PROSITE" id="PS00052">
    <property type="entry name" value="RIBOSOMAL_S7"/>
    <property type="match status" value="1"/>
</dbReference>
<organism>
    <name type="scientific">Rhodospirillum centenum (strain ATCC 51521 / SW)</name>
    <dbReference type="NCBI Taxonomy" id="414684"/>
    <lineage>
        <taxon>Bacteria</taxon>
        <taxon>Pseudomonadati</taxon>
        <taxon>Pseudomonadota</taxon>
        <taxon>Alphaproteobacteria</taxon>
        <taxon>Rhodospirillales</taxon>
        <taxon>Rhodospirillaceae</taxon>
        <taxon>Rhodospirillum</taxon>
    </lineage>
</organism>
<protein>
    <recommendedName>
        <fullName evidence="1">Small ribosomal subunit protein uS7</fullName>
    </recommendedName>
    <alternativeName>
        <fullName evidence="2">30S ribosomal protein S7</fullName>
    </alternativeName>
</protein>
<comment type="function">
    <text evidence="1">One of the primary rRNA binding proteins, it binds directly to 16S rRNA where it nucleates assembly of the head domain of the 30S subunit. Is located at the subunit interface close to the decoding center, probably blocks exit of the E-site tRNA.</text>
</comment>
<comment type="subunit">
    <text evidence="1">Part of the 30S ribosomal subunit. Contacts proteins S9 and S11.</text>
</comment>
<comment type="similarity">
    <text evidence="1">Belongs to the universal ribosomal protein uS7 family.</text>
</comment>
<accession>B6IRQ2</accession>
<reference key="1">
    <citation type="submission" date="2007-03" db="EMBL/GenBank/DDBJ databases">
        <title>Genome sequence of Rhodospirillum centenum.</title>
        <authorList>
            <person name="Touchman J.W."/>
            <person name="Bauer C."/>
            <person name="Blankenship R.E."/>
        </authorList>
    </citation>
    <scope>NUCLEOTIDE SEQUENCE [LARGE SCALE GENOMIC DNA]</scope>
    <source>
        <strain>ATCC 51521 / SW</strain>
    </source>
</reference>
<feature type="chain" id="PRO_1000125991" description="Small ribosomal subunit protein uS7">
    <location>
        <begin position="1"/>
        <end position="156"/>
    </location>
</feature>
<name>RS7_RHOCS</name>
<gene>
    <name evidence="1" type="primary">rpsG</name>
    <name type="ordered locus">RC1_0707</name>
</gene>
<proteinExistence type="inferred from homology"/>
<evidence type="ECO:0000255" key="1">
    <source>
        <dbReference type="HAMAP-Rule" id="MF_00480"/>
    </source>
</evidence>
<evidence type="ECO:0000305" key="2"/>
<sequence length="156" mass="17825">MSRRRKAEKREVLPDAKFGDVVLTKFMNCLMYDGKKSVAESIVYGALDRIEAKAKQNALQLFHDALNNVRPYLEVRSRRVGGATYQVPVEVRSERAQALAIRWIISAARGRSEDTMTERLSAELLDAANQRGTAVKKREDTHRMAEANKAFSHYRW</sequence>
<keyword id="KW-1185">Reference proteome</keyword>
<keyword id="KW-0687">Ribonucleoprotein</keyword>
<keyword id="KW-0689">Ribosomal protein</keyword>
<keyword id="KW-0694">RNA-binding</keyword>
<keyword id="KW-0699">rRNA-binding</keyword>
<keyword id="KW-0820">tRNA-binding</keyword>